<gene>
    <name type="primary">gdt8</name>
    <name type="ORF">DDB_G0270668</name>
</gene>
<organism>
    <name type="scientific">Dictyostelium discoideum</name>
    <name type="common">Social amoeba</name>
    <dbReference type="NCBI Taxonomy" id="44689"/>
    <lineage>
        <taxon>Eukaryota</taxon>
        <taxon>Amoebozoa</taxon>
        <taxon>Evosea</taxon>
        <taxon>Eumycetozoa</taxon>
        <taxon>Dictyostelia</taxon>
        <taxon>Dictyosteliales</taxon>
        <taxon>Dictyosteliaceae</taxon>
        <taxon>Dictyostelium</taxon>
    </lineage>
</organism>
<keyword id="KW-0067">ATP-binding</keyword>
<keyword id="KW-0418">Kinase</keyword>
<keyword id="KW-0472">Membrane</keyword>
<keyword id="KW-0547">Nucleotide-binding</keyword>
<keyword id="KW-1185">Reference proteome</keyword>
<keyword id="KW-0723">Serine/threonine-protein kinase</keyword>
<keyword id="KW-0732">Signal</keyword>
<keyword id="KW-0808">Transferase</keyword>
<keyword id="KW-0812">Transmembrane</keyword>
<keyword id="KW-1133">Transmembrane helix</keyword>
<protein>
    <recommendedName>
        <fullName>Probable serine/threonine-protein kinase gdt8</fullName>
        <ecNumber>2.7.11.1</ecNumber>
    </recommendedName>
    <alternativeName>
        <fullName>Growth-differentiation transition protein 8</fullName>
    </alternativeName>
</protein>
<name>GDT8_DICDI</name>
<dbReference type="EC" id="2.7.11.1"/>
<dbReference type="EMBL" id="AAFI02000005">
    <property type="protein sequence ID" value="EAL72684.1"/>
    <property type="molecule type" value="Genomic_DNA"/>
</dbReference>
<dbReference type="RefSeq" id="XP_646342.1">
    <property type="nucleotide sequence ID" value="XM_641250.1"/>
</dbReference>
<dbReference type="SMR" id="Q55CY9"/>
<dbReference type="FunCoup" id="Q55CY9">
    <property type="interactions" value="82"/>
</dbReference>
<dbReference type="PaxDb" id="44689-DDB0220636"/>
<dbReference type="EnsemblProtists" id="EAL72684">
    <property type="protein sequence ID" value="EAL72684"/>
    <property type="gene ID" value="DDB_G0270668"/>
</dbReference>
<dbReference type="GeneID" id="8617297"/>
<dbReference type="KEGG" id="ddi:DDB_G0270668"/>
<dbReference type="dictyBase" id="DDB_G0270668">
    <property type="gene designation" value="gdt8"/>
</dbReference>
<dbReference type="VEuPathDB" id="AmoebaDB:DDB_G0270668"/>
<dbReference type="eggNOG" id="KOG0192">
    <property type="taxonomic scope" value="Eukaryota"/>
</dbReference>
<dbReference type="HOGENOM" id="CLU_251247_0_0_1"/>
<dbReference type="InParanoid" id="Q55CY9"/>
<dbReference type="PhylomeDB" id="Q55CY9"/>
<dbReference type="PRO" id="PR:Q55CY9"/>
<dbReference type="Proteomes" id="UP000002195">
    <property type="component" value="Chromosome 1"/>
</dbReference>
<dbReference type="GO" id="GO:0016020">
    <property type="term" value="C:membrane"/>
    <property type="evidence" value="ECO:0007669"/>
    <property type="project" value="UniProtKB-SubCell"/>
</dbReference>
<dbReference type="GO" id="GO:0005524">
    <property type="term" value="F:ATP binding"/>
    <property type="evidence" value="ECO:0007669"/>
    <property type="project" value="UniProtKB-KW"/>
</dbReference>
<dbReference type="GO" id="GO:0106310">
    <property type="term" value="F:protein serine kinase activity"/>
    <property type="evidence" value="ECO:0007669"/>
    <property type="project" value="RHEA"/>
</dbReference>
<dbReference type="GO" id="GO:0004674">
    <property type="term" value="F:protein serine/threonine kinase activity"/>
    <property type="evidence" value="ECO:0007669"/>
    <property type="project" value="UniProtKB-KW"/>
</dbReference>
<dbReference type="GO" id="GO:0050793">
    <property type="term" value="P:regulation of developmental process"/>
    <property type="evidence" value="ECO:0000318"/>
    <property type="project" value="GO_Central"/>
</dbReference>
<dbReference type="Gene3D" id="3.30.200.20">
    <property type="entry name" value="Phosphorylase Kinase, domain 1"/>
    <property type="match status" value="1"/>
</dbReference>
<dbReference type="Gene3D" id="1.10.510.10">
    <property type="entry name" value="Transferase(Phosphotransferase) domain 1"/>
    <property type="match status" value="1"/>
</dbReference>
<dbReference type="InterPro" id="IPR052015">
    <property type="entry name" value="GDT_regulator"/>
</dbReference>
<dbReference type="InterPro" id="IPR011009">
    <property type="entry name" value="Kinase-like_dom_sf"/>
</dbReference>
<dbReference type="InterPro" id="IPR000719">
    <property type="entry name" value="Prot_kinase_dom"/>
</dbReference>
<dbReference type="InterPro" id="IPR001245">
    <property type="entry name" value="Ser-Thr/Tyr_kinase_cat_dom"/>
</dbReference>
<dbReference type="InterPro" id="IPR008271">
    <property type="entry name" value="Ser/Thr_kinase_AS"/>
</dbReference>
<dbReference type="InterPro" id="IPR026237">
    <property type="entry name" value="STKINASEGDT"/>
</dbReference>
<dbReference type="PANTHER" id="PTHR47774">
    <property type="entry name" value="GROWTH-DIFFERENTIATION TRANSITION PROTEIN 5-RELATED"/>
    <property type="match status" value="1"/>
</dbReference>
<dbReference type="PANTHER" id="PTHR47774:SF1">
    <property type="entry name" value="GROWTH-DIFFERENTIATION TRANSITION PROTEIN 5-RELATED"/>
    <property type="match status" value="1"/>
</dbReference>
<dbReference type="Pfam" id="PF07714">
    <property type="entry name" value="PK_Tyr_Ser-Thr"/>
    <property type="match status" value="1"/>
</dbReference>
<dbReference type="PRINTS" id="PR02079">
    <property type="entry name" value="STKINASEGDT"/>
</dbReference>
<dbReference type="SMART" id="SM00220">
    <property type="entry name" value="S_TKc"/>
    <property type="match status" value="1"/>
</dbReference>
<dbReference type="SUPFAM" id="SSF56112">
    <property type="entry name" value="Protein kinase-like (PK-like)"/>
    <property type="match status" value="1"/>
</dbReference>
<dbReference type="PROSITE" id="PS50011">
    <property type="entry name" value="PROTEIN_KINASE_DOM"/>
    <property type="match status" value="1"/>
</dbReference>
<dbReference type="PROSITE" id="PS00108">
    <property type="entry name" value="PROTEIN_KINASE_ST"/>
    <property type="match status" value="1"/>
</dbReference>
<proteinExistence type="inferred from homology"/>
<comment type="catalytic activity">
    <reaction>
        <text>L-seryl-[protein] + ATP = O-phospho-L-seryl-[protein] + ADP + H(+)</text>
        <dbReference type="Rhea" id="RHEA:17989"/>
        <dbReference type="Rhea" id="RHEA-COMP:9863"/>
        <dbReference type="Rhea" id="RHEA-COMP:11604"/>
        <dbReference type="ChEBI" id="CHEBI:15378"/>
        <dbReference type="ChEBI" id="CHEBI:29999"/>
        <dbReference type="ChEBI" id="CHEBI:30616"/>
        <dbReference type="ChEBI" id="CHEBI:83421"/>
        <dbReference type="ChEBI" id="CHEBI:456216"/>
        <dbReference type="EC" id="2.7.11.1"/>
    </reaction>
</comment>
<comment type="catalytic activity">
    <reaction>
        <text>L-threonyl-[protein] + ATP = O-phospho-L-threonyl-[protein] + ADP + H(+)</text>
        <dbReference type="Rhea" id="RHEA:46608"/>
        <dbReference type="Rhea" id="RHEA-COMP:11060"/>
        <dbReference type="Rhea" id="RHEA-COMP:11605"/>
        <dbReference type="ChEBI" id="CHEBI:15378"/>
        <dbReference type="ChEBI" id="CHEBI:30013"/>
        <dbReference type="ChEBI" id="CHEBI:30616"/>
        <dbReference type="ChEBI" id="CHEBI:61977"/>
        <dbReference type="ChEBI" id="CHEBI:456216"/>
        <dbReference type="EC" id="2.7.11.1"/>
    </reaction>
</comment>
<comment type="subcellular location">
    <subcellularLocation>
        <location evidence="5">Membrane</location>
        <topology evidence="5">Single-pass type I membrane protein</topology>
    </subcellularLocation>
</comment>
<comment type="similarity">
    <text evidence="5">In the N-terminal section; belongs to the GDT family.</text>
</comment>
<comment type="similarity">
    <text evidence="5">In the C-terminal section; belongs to the protein kinase superfamily. TKL Ser/Thr protein kinase family.</text>
</comment>
<reference key="1">
    <citation type="journal article" date="2005" name="Nature">
        <title>The genome of the social amoeba Dictyostelium discoideum.</title>
        <authorList>
            <person name="Eichinger L."/>
            <person name="Pachebat J.A."/>
            <person name="Gloeckner G."/>
            <person name="Rajandream M.A."/>
            <person name="Sucgang R."/>
            <person name="Berriman M."/>
            <person name="Song J."/>
            <person name="Olsen R."/>
            <person name="Szafranski K."/>
            <person name="Xu Q."/>
            <person name="Tunggal B."/>
            <person name="Kummerfeld S."/>
            <person name="Madera M."/>
            <person name="Konfortov B.A."/>
            <person name="Rivero F."/>
            <person name="Bankier A.T."/>
            <person name="Lehmann R."/>
            <person name="Hamlin N."/>
            <person name="Davies R."/>
            <person name="Gaudet P."/>
            <person name="Fey P."/>
            <person name="Pilcher K."/>
            <person name="Chen G."/>
            <person name="Saunders D."/>
            <person name="Sodergren E.J."/>
            <person name="Davis P."/>
            <person name="Kerhornou A."/>
            <person name="Nie X."/>
            <person name="Hall N."/>
            <person name="Anjard C."/>
            <person name="Hemphill L."/>
            <person name="Bason N."/>
            <person name="Farbrother P."/>
            <person name="Desany B."/>
            <person name="Just E."/>
            <person name="Morio T."/>
            <person name="Rost R."/>
            <person name="Churcher C.M."/>
            <person name="Cooper J."/>
            <person name="Haydock S."/>
            <person name="van Driessche N."/>
            <person name="Cronin A."/>
            <person name="Goodhead I."/>
            <person name="Muzny D.M."/>
            <person name="Mourier T."/>
            <person name="Pain A."/>
            <person name="Lu M."/>
            <person name="Harper D."/>
            <person name="Lindsay R."/>
            <person name="Hauser H."/>
            <person name="James K.D."/>
            <person name="Quiles M."/>
            <person name="Madan Babu M."/>
            <person name="Saito T."/>
            <person name="Buchrieser C."/>
            <person name="Wardroper A."/>
            <person name="Felder M."/>
            <person name="Thangavelu M."/>
            <person name="Johnson D."/>
            <person name="Knights A."/>
            <person name="Loulseged H."/>
            <person name="Mungall K.L."/>
            <person name="Oliver K."/>
            <person name="Price C."/>
            <person name="Quail M.A."/>
            <person name="Urushihara H."/>
            <person name="Hernandez J."/>
            <person name="Rabbinowitsch E."/>
            <person name="Steffen D."/>
            <person name="Sanders M."/>
            <person name="Ma J."/>
            <person name="Kohara Y."/>
            <person name="Sharp S."/>
            <person name="Simmonds M.N."/>
            <person name="Spiegler S."/>
            <person name="Tivey A."/>
            <person name="Sugano S."/>
            <person name="White B."/>
            <person name="Walker D."/>
            <person name="Woodward J.R."/>
            <person name="Winckler T."/>
            <person name="Tanaka Y."/>
            <person name="Shaulsky G."/>
            <person name="Schleicher M."/>
            <person name="Weinstock G.M."/>
            <person name="Rosenthal A."/>
            <person name="Cox E.C."/>
            <person name="Chisholm R.L."/>
            <person name="Gibbs R.A."/>
            <person name="Loomis W.F."/>
            <person name="Platzer M."/>
            <person name="Kay R.R."/>
            <person name="Williams J.G."/>
            <person name="Dear P.H."/>
            <person name="Noegel A.A."/>
            <person name="Barrell B.G."/>
            <person name="Kuspa A."/>
        </authorList>
    </citation>
    <scope>NUCLEOTIDE SEQUENCE [LARGE SCALE GENOMIC DNA]</scope>
    <source>
        <strain>AX4</strain>
    </source>
</reference>
<reference key="2">
    <citation type="journal article" date="2004" name="BMC Dev. Biol.">
        <title>Gdt2 regulates the transition of Dictyostelium cells from growth to differentiation.</title>
        <authorList>
            <person name="Chibalina M.V."/>
            <person name="Anjard C."/>
            <person name="Insall R.H."/>
        </authorList>
    </citation>
    <scope>IDENTIFICATION</scope>
    <scope>NOMENCLATURE</scope>
</reference>
<sequence>MINKILIKLITIIIFCFSFLFAEEDLIRTPPGYYNLTRHKRYPHITEYQSSQDTDLYYPDVCRNALRNDIIPGVDEFFPFLFPGFNSDGPNSIYIQKNSSLLFKSESLGTTYNFVAVCVEGSFTVKGSMFFTINSLIILPGGRFESEAGIEFYDENDPLHIYNNPDFPKDPFGFFPGILVLGGTISVVAKESLVYRADRISNSSIEISPPFSPMNKINQTIRIFTELYPLGFYCSFSSDLERKILSLLDCLPISENDKIIRVLIEVDRDQNVSPTNILKKGKTTKGSIYITGDSNVYFKNMFFKNLGFTTNEPYNDTKLIFSPNDPNQVTDIIMGTNQRFRSSLYIEFSKNVTIDGCAFFEDNLTRSPLVLFDSNVIISNSLISSKSGSNIIAQYGTESIQSSNNSYILVKIDTASLDVDQNNNNNNNNNNNNNNNNNNNNNNNNNNNNNNNNNNNNNNNMDYGNQGNGIYSISPNINSNGDSFFGQQYAFNYYFISKNSVNSNQDNSSLLNSKPIELIIIDSSFNPTNSNGSLNKYLLNINSDGNKTISTYLVCNSIIEYYSGWLMDNLNSNQQISFEGNLFQNGCNKVDGNCTISQNSKYSTDLPKVANQTKFDEIVQLDKLFSNGITSINPNEKVIISTKINSKIHYYQIQLFFTHLPIDDQPTPLSIYIENQPVFLLEPIKSTFPTFNNFTFKFENKNSLDKINIAFTTRGDIYLTSMATYSSIVVEPPTETPTETPTETPTETPTDTPTQTPTQTPILTSKPITQISVDRNENLELKIALPICLSLALLIGIIIMICIFKKVQSNSKLKKDDDENEMATIKEGNKSIIVSQPPTVIEEKPQDNSKPDDQKLIERDQQINNPILKIREYPSLKDIELSNEETKSPQYGSLNSFSTLQFSRQYDYGSEEFPFQFNKQVLEFNLNGRKCMNDEVINDSLMIHNKSEITYLVNIIFPQNIETGCVSILNVEIFNESFELLPHCTTEVKFSLTLTCTTKFLENFAVLVEAQGSKCHTFLSVHVESETSLKLDYKEIKTEQLIASYLPSKVYVFKGYYRDLAVAVKKFAISDNSKSFEKIKNEVQILSKVNNINVVRYIGSAQNISHVCIVTEYAKEGSLGSLIHDSKIKLSFIQKVKFMLDAAKGFTFLHASEIVHGDIKPDNLLVFSKEISGVCVKICDFGNSEELGEKESKSKPDSTMNYLPNEVFDGEGYQKSADVYAFGVSLYEVMVEKIPFHEICYNDIPNRVQDGFRPTADLDTIDDDIRKIIECCWIKEKSKRPSFSEISLHLEIKFSKLLHQMNESEESTSNHNTNSKTKEDKDLDEN</sequence>
<accession>Q55CY9</accession>
<evidence type="ECO:0000255" key="1"/>
<evidence type="ECO:0000255" key="2">
    <source>
        <dbReference type="PROSITE-ProRule" id="PRU00159"/>
    </source>
</evidence>
<evidence type="ECO:0000255" key="3">
    <source>
        <dbReference type="PROSITE-ProRule" id="PRU10027"/>
    </source>
</evidence>
<evidence type="ECO:0000256" key="4">
    <source>
        <dbReference type="SAM" id="MobiDB-lite"/>
    </source>
</evidence>
<evidence type="ECO:0000305" key="5"/>
<feature type="signal peptide" evidence="1">
    <location>
        <begin position="1"/>
        <end position="22"/>
    </location>
</feature>
<feature type="chain" id="PRO_0000323585" description="Probable serine/threonine-protein kinase gdt8">
    <location>
        <begin position="23"/>
        <end position="1326"/>
    </location>
</feature>
<feature type="topological domain" description="Extracellular" evidence="1">
    <location>
        <begin position="23"/>
        <end position="782"/>
    </location>
</feature>
<feature type="transmembrane region" description="Helical" evidence="1">
    <location>
        <begin position="783"/>
        <end position="803"/>
    </location>
</feature>
<feature type="topological domain" description="Cytoplasmic" evidence="1">
    <location>
        <begin position="804"/>
        <end position="1326"/>
    </location>
</feature>
<feature type="domain" description="Protein kinase" evidence="2">
    <location>
        <begin position="1036"/>
        <end position="1292"/>
    </location>
</feature>
<feature type="region of interest" description="Disordered" evidence="4">
    <location>
        <begin position="419"/>
        <end position="467"/>
    </location>
</feature>
<feature type="region of interest" description="Disordered" evidence="4">
    <location>
        <begin position="731"/>
        <end position="762"/>
    </location>
</feature>
<feature type="region of interest" description="Disordered" evidence="4">
    <location>
        <begin position="833"/>
        <end position="858"/>
    </location>
</feature>
<feature type="region of interest" description="Disordered" evidence="4">
    <location>
        <begin position="1301"/>
        <end position="1326"/>
    </location>
</feature>
<feature type="compositionally biased region" description="Low complexity" evidence="4">
    <location>
        <begin position="422"/>
        <end position="460"/>
    </location>
</feature>
<feature type="compositionally biased region" description="Low complexity" evidence="4">
    <location>
        <begin position="731"/>
        <end position="761"/>
    </location>
</feature>
<feature type="compositionally biased region" description="Basic and acidic residues" evidence="4">
    <location>
        <begin position="841"/>
        <end position="858"/>
    </location>
</feature>
<feature type="compositionally biased region" description="Basic and acidic residues" evidence="4">
    <location>
        <begin position="1316"/>
        <end position="1326"/>
    </location>
</feature>
<feature type="active site" description="Proton acceptor" evidence="2 3">
    <location>
        <position position="1158"/>
    </location>
</feature>
<feature type="binding site" evidence="2">
    <location>
        <begin position="1042"/>
        <end position="1050"/>
    </location>
    <ligand>
        <name>ATP</name>
        <dbReference type="ChEBI" id="CHEBI:30616"/>
    </ligand>
</feature>
<feature type="binding site" evidence="2">
    <location>
        <position position="1065"/>
    </location>
    <ligand>
        <name>ATP</name>
        <dbReference type="ChEBI" id="CHEBI:30616"/>
    </ligand>
</feature>